<sequence length="124" mass="13957">MKNVLIIFGKPYCSICENVSEAVEELKSEYDILHVDILSFFLKDGASSMLGDVKRGTLIGNFAAHLSNYIVSIFKYNPQTKQMAFVDINKSLDFTKTDKSLVNLEILKSEIEKATYGVWPPVTE</sequence>
<organismHost>
    <name type="scientific">Bos taurus</name>
    <name type="common">Bovine</name>
    <dbReference type="NCBI Taxonomy" id="9913"/>
</organismHost>
<organismHost>
    <name type="scientific">Felis catus</name>
    <name type="common">Cat</name>
    <name type="synonym">Felis silvestris catus</name>
    <dbReference type="NCBI Taxonomy" id="9685"/>
</organismHost>
<organismHost>
    <name type="scientific">Homo sapiens</name>
    <name type="common">Human</name>
    <dbReference type="NCBI Taxonomy" id="9606"/>
</organismHost>
<organismHost>
    <name type="scientific">Loxodonta africana</name>
    <name type="common">African elephant</name>
    <dbReference type="NCBI Taxonomy" id="9785"/>
</organismHost>
<organismHost>
    <name type="scientific">Microtus agrestis</name>
    <name type="common">Short-tailed field vole</name>
    <dbReference type="NCBI Taxonomy" id="29092"/>
</organismHost>
<organismHost>
    <name type="scientific">Mus musculus</name>
    <name type="common">Mouse</name>
    <dbReference type="NCBI Taxonomy" id="10090"/>
</organismHost>
<organismHost>
    <name type="scientific">Myodes glareolus</name>
    <name type="common">Bank vole</name>
    <name type="synonym">Clethrionomys glareolus</name>
    <dbReference type="NCBI Taxonomy" id="447135"/>
</organismHost>
<protein>
    <recommendedName>
        <fullName>Glutaredoxin-2</fullName>
    </recommendedName>
</protein>
<reference key="1">
    <citation type="submission" date="2003-05" db="EMBL/GenBank/DDBJ databases">
        <authorList>
            <person name="Dietrich F.S."/>
            <person name="Ray C.A."/>
            <person name="Sharma A.D."/>
            <person name="Allen A."/>
            <person name="Pickup D.J."/>
        </authorList>
    </citation>
    <scope>NUCLEOTIDE SEQUENCE [LARGE SCALE GENOMIC DNA]</scope>
</reference>
<keyword id="KW-1015">Disulfide bond</keyword>
<keyword id="KW-0249">Electron transport</keyword>
<keyword id="KW-1035">Host cytoplasm</keyword>
<keyword id="KW-0676">Redox-active center</keyword>
<keyword id="KW-0813">Transport</keyword>
<evidence type="ECO:0000250" key="1">
    <source>
        <dbReference type="UniProtKB" id="P68460"/>
    </source>
</evidence>
<evidence type="ECO:0000305" key="2"/>
<organism>
    <name type="scientific">Cowpox virus (strain Brighton Red)</name>
    <name type="common">CPV</name>
    <dbReference type="NCBI Taxonomy" id="265872"/>
    <lineage>
        <taxon>Viruses</taxon>
        <taxon>Varidnaviria</taxon>
        <taxon>Bamfordvirae</taxon>
        <taxon>Nucleocytoviricota</taxon>
        <taxon>Pokkesviricetes</taxon>
        <taxon>Chitovirales</taxon>
        <taxon>Poxviridae</taxon>
        <taxon>Chordopoxvirinae</taxon>
        <taxon>Orthopoxvirus</taxon>
        <taxon>Cowpox virus</taxon>
    </lineage>
</organism>
<gene>
    <name type="primary">OPG088</name>
    <name type="ordered locus">CPXV091</name>
</gene>
<accession>Q8QMY0</accession>
<comment type="function">
    <text evidence="1">Glutaredoxin necessary for virion morphogenesis and virus replication. Functions as a thiol-disulfide transfer protein between membrane-associated OPG128 and substrates OPG095 or OPG053. The complete pathway for formation of disulfide bonds in intracellular virion membrane proteins sequentially involves oxidation of OPG072, OPG128 and OPG088. Exhibit thioltransferase and dehydroascorbate reductase activities in vitro.</text>
</comment>
<comment type="subunit">
    <text evidence="1">Homodimer.</text>
</comment>
<comment type="subcellular location">
    <subcellularLocation>
        <location evidence="1">Host cytoplasm</location>
    </subcellularLocation>
</comment>
<comment type="induction">
    <text evidence="1">Expressed in the intermediate phase of the viral replicative cycle.</text>
</comment>
<comment type="similarity">
    <text evidence="2">Belongs to the glutaredoxin family.</text>
</comment>
<proteinExistence type="inferred from homology"/>
<feature type="chain" id="PRO_0000141633" description="Glutaredoxin-2">
    <location>
        <begin position="1"/>
        <end position="124"/>
    </location>
</feature>
<feature type="disulfide bond" description="Redox-active" evidence="1">
    <location>
        <begin position="13"/>
        <end position="16"/>
    </location>
</feature>
<dbReference type="EMBL" id="AF482758">
    <property type="protein sequence ID" value="AAM13536.1"/>
    <property type="molecule type" value="Genomic_DNA"/>
</dbReference>
<dbReference type="SMR" id="Q8QMY0"/>
<dbReference type="DNASU" id="1485968"/>
<dbReference type="KEGG" id="vg:1485968"/>
<dbReference type="Proteomes" id="UP000152733">
    <property type="component" value="Segment"/>
</dbReference>
<dbReference type="GO" id="GO:0030430">
    <property type="term" value="C:host cell cytoplasm"/>
    <property type="evidence" value="ECO:0007669"/>
    <property type="project" value="UniProtKB-SubCell"/>
</dbReference>
<dbReference type="Gene3D" id="3.40.30.10">
    <property type="entry name" value="Glutaredoxin"/>
    <property type="match status" value="1"/>
</dbReference>
<dbReference type="InterPro" id="IPR008554">
    <property type="entry name" value="Glutaredoxin-like"/>
</dbReference>
<dbReference type="InterPro" id="IPR036249">
    <property type="entry name" value="Thioredoxin-like_sf"/>
</dbReference>
<dbReference type="Pfam" id="PF05768">
    <property type="entry name" value="Glrx-like"/>
    <property type="match status" value="1"/>
</dbReference>
<dbReference type="SUPFAM" id="SSF52833">
    <property type="entry name" value="Thioredoxin-like"/>
    <property type="match status" value="1"/>
</dbReference>
<name>GLRX2_CWPXB</name>